<protein>
    <recommendedName>
        <fullName>U9-lycotoxin-Ls1a</fullName>
    </recommendedName>
    <alternativeName>
        <fullName>Toxin-like structure LSTX-H30</fullName>
    </alternativeName>
</protein>
<comment type="subcellular location">
    <subcellularLocation>
        <location evidence="1">Secreted</location>
    </subcellularLocation>
</comment>
<comment type="tissue specificity">
    <text>Expressed by the venom gland.</text>
</comment>
<comment type="PTM">
    <text evidence="1">Contains 4 disulfide bonds.</text>
</comment>
<comment type="similarity">
    <text evidence="3">Belongs to the neurotoxin 19 (CSTX) family. 08 (U8-Lctx) subfamily.</text>
</comment>
<comment type="sequence caution" evidence="3">
    <conflict type="frameshift">
        <sequence resource="EMBL-CDS" id="ACI41417"/>
    </conflict>
</comment>
<comment type="sequence caution" evidence="3">
    <conflict type="frameshift">
        <sequence resource="EMBL-CDS" id="CAS03686"/>
    </conflict>
</comment>
<evidence type="ECO:0000250" key="1"/>
<evidence type="ECO:0000255" key="2"/>
<evidence type="ECO:0000305" key="3"/>
<accession>B6DD01</accession>
<feature type="signal peptide" evidence="2">
    <location>
        <begin position="1"/>
        <end position="20"/>
    </location>
</feature>
<feature type="propeptide" id="PRO_0000401821" evidence="1">
    <location>
        <begin position="21"/>
        <end position="26"/>
    </location>
</feature>
<feature type="chain" id="PRO_0000401822" description="U9-lycotoxin-Ls1a">
    <location>
        <begin position="27"/>
        <end position="77"/>
    </location>
</feature>
<name>TX830_LYCSI</name>
<keyword id="KW-1015">Disulfide bond</keyword>
<keyword id="KW-0964">Secreted</keyword>
<keyword id="KW-0732">Signal</keyword>
<keyword id="KW-0800">Toxin</keyword>
<proteinExistence type="evidence at transcript level"/>
<reference key="1">
    <citation type="journal article" date="2010" name="Zoology">
        <title>Transcriptome analysis of the venom glands of the Chinese wolf spider Lycosa singoriensis.</title>
        <authorList>
            <person name="Zhang Y."/>
            <person name="Chen J."/>
            <person name="Tang X."/>
            <person name="Wang F."/>
            <person name="Jiang L."/>
            <person name="Xiong X."/>
            <person name="Wang M."/>
            <person name="Rong M."/>
            <person name="Liu Z."/>
            <person name="Liang S."/>
        </authorList>
    </citation>
    <scope>NUCLEOTIDE SEQUENCE [LARGE SCALE MRNA]</scope>
    <source>
        <tissue>Venom gland</tissue>
    </source>
</reference>
<dbReference type="EMBL" id="EU926085">
    <property type="protein sequence ID" value="ACI41417.1"/>
    <property type="status" value="ALT_FRAME"/>
    <property type="molecule type" value="mRNA"/>
</dbReference>
<dbReference type="EMBL" id="FM864089">
    <property type="protein sequence ID" value="CAS03686.1"/>
    <property type="status" value="ALT_FRAME"/>
    <property type="molecule type" value="mRNA"/>
</dbReference>
<dbReference type="SMR" id="B6DD01"/>
<dbReference type="ArachnoServer" id="AS001024">
    <property type="toxin name" value="U9-lycotoxin-Ls1a"/>
</dbReference>
<dbReference type="GO" id="GO:0005576">
    <property type="term" value="C:extracellular region"/>
    <property type="evidence" value="ECO:0007669"/>
    <property type="project" value="UniProtKB-SubCell"/>
</dbReference>
<dbReference type="GO" id="GO:0090729">
    <property type="term" value="F:toxin activity"/>
    <property type="evidence" value="ECO:0007669"/>
    <property type="project" value="UniProtKB-KW"/>
</dbReference>
<dbReference type="InterPro" id="IPR019553">
    <property type="entry name" value="Spider_toxin_CSTX_knottin"/>
</dbReference>
<dbReference type="Pfam" id="PF10530">
    <property type="entry name" value="Toxin_35"/>
    <property type="match status" value="1"/>
</dbReference>
<sequence length="77" mass="8707">MKLLLFTALVLVVIVSLIEAEAENERACLAEYKVCTDDTGNCCSNLVCDCYRRSKHGVPKGRSCFCLEKDVRYTREI</sequence>
<organism>
    <name type="scientific">Lycosa singoriensis</name>
    <name type="common">Wolf spider</name>
    <name type="synonym">Aranea singoriensis</name>
    <dbReference type="NCBI Taxonomy" id="434756"/>
    <lineage>
        <taxon>Eukaryota</taxon>
        <taxon>Metazoa</taxon>
        <taxon>Ecdysozoa</taxon>
        <taxon>Arthropoda</taxon>
        <taxon>Chelicerata</taxon>
        <taxon>Arachnida</taxon>
        <taxon>Araneae</taxon>
        <taxon>Araneomorphae</taxon>
        <taxon>Entelegynae</taxon>
        <taxon>Lycosoidea</taxon>
        <taxon>Lycosidae</taxon>
        <taxon>Lycosa</taxon>
    </lineage>
</organism>